<comment type="function">
    <text evidence="2 5 7 8 15">A cytochrome P450 monooxygenase involved in the metabolism of retinoates (RAs), the active metabolites of vitamin A, and critical signaling molecules in animals (PubMed:10823918, PubMed:22020119). RAs exist as at least four different isomers: all-trans-RA (atRA), 9-cis-RA, 13-cis-RA, and 9,13-dicis-RA, where atRA is considered to be the biologically active isomer, although 9-cis-RA and 13-cis-RA also have activity (Probable). Catalyzes the hydroxylation of atRA primarily at C-4 and C-18, thereby contributing to the regulation of atRA homeostasis and signaling (PubMed:10823918). Hydroxylation of atRA limits its biological activity and initiates a degradative process leading to its eventual elimination (PubMed:10823918, PubMed:22020119). Involved in the convertion of atRA to all-trans-4-oxo-RA. Can oxidize all-trans-13,14-dihydroretinoate (DRA) to metabolites which could include all-trans-4-oxo-DRA, all-trans-4-hydroxy-DRA, all-trans-5,8-epoxy-DRA, and all-trans-18-hydroxy-DRA (By similarity). Shows preference for the following substrates: atRA &gt; 9-cis-RA &gt; 13-cis-RA (PubMed:10823918, PubMed:22020119). Plays a central role in germ cell development: acts by degrading RAs in the developing testis, preventing STRA8 expression, thereby leading to delay of meiosis. Required for the maintenance of the undifferentiated state of male germ cells during embryonic development in Sertoli cells, inducing arrest in G0 phase of the cell cycle and preventing meiotic entry. Plays a role in skeletal development, both at the level of patterning and in the ossification of bone and the establishment of some synovial joints (PubMed:22019272). Essential for postnatal survival (By similarity).</text>
</comment>
<comment type="function">
    <text evidence="9">Also has a significant activity in oxidation of tazarotenic acid and may therefore metabolize that xenobiotic in vivo.</text>
</comment>
<comment type="catalytic activity">
    <reaction evidence="5 8">
        <text>all-trans-retinoate + reduced [NADPH--hemoprotein reductase] + O2 = all-trans-4-hydroxyretinoate + oxidized [NADPH--hemoprotein reductase] + H2O + H(+)</text>
        <dbReference type="Rhea" id="RHEA:51984"/>
        <dbReference type="Rhea" id="RHEA-COMP:11964"/>
        <dbReference type="Rhea" id="RHEA-COMP:11965"/>
        <dbReference type="ChEBI" id="CHEBI:15377"/>
        <dbReference type="ChEBI" id="CHEBI:15378"/>
        <dbReference type="ChEBI" id="CHEBI:15379"/>
        <dbReference type="ChEBI" id="CHEBI:35291"/>
        <dbReference type="ChEBI" id="CHEBI:57618"/>
        <dbReference type="ChEBI" id="CHEBI:58210"/>
        <dbReference type="ChEBI" id="CHEBI:134178"/>
    </reaction>
    <physiologicalReaction direction="left-to-right" evidence="5 8">
        <dbReference type="Rhea" id="RHEA:51985"/>
    </physiologicalReaction>
</comment>
<comment type="catalytic activity">
    <reaction evidence="2">
        <text>all-trans-retinoate + reduced [NADPH--hemoprotein reductase] + O2 = all-trans-18-hydroxyretinoate + oxidized [NADPH--hemoprotein reductase] + H2O + H(+)</text>
        <dbReference type="Rhea" id="RHEA:55856"/>
        <dbReference type="Rhea" id="RHEA-COMP:11964"/>
        <dbReference type="Rhea" id="RHEA-COMP:11965"/>
        <dbReference type="ChEBI" id="CHEBI:15377"/>
        <dbReference type="ChEBI" id="CHEBI:15378"/>
        <dbReference type="ChEBI" id="CHEBI:15379"/>
        <dbReference type="ChEBI" id="CHEBI:35291"/>
        <dbReference type="ChEBI" id="CHEBI:57618"/>
        <dbReference type="ChEBI" id="CHEBI:58210"/>
        <dbReference type="ChEBI" id="CHEBI:139258"/>
    </reaction>
    <physiologicalReaction direction="left-to-right" evidence="2">
        <dbReference type="Rhea" id="RHEA:55857"/>
    </physiologicalReaction>
</comment>
<comment type="cofactor">
    <cofactor evidence="3">
        <name>heme</name>
        <dbReference type="ChEBI" id="CHEBI:30413"/>
    </cofactor>
</comment>
<comment type="biophysicochemical properties">
    <kinetics>
        <KM evidence="9">1.01 uM for tazarotenic acid (measured in vitro by the production of tazarotenic acid-sulfoxide)</KM>
        <KM evidence="9">0.56 uM for tazarotenic acid (measured in vitro by the production of hydroxytazarotenic acid production)</KM>
    </kinetics>
</comment>
<comment type="interaction">
    <interactant intactId="EBI-25928065">
        <id>Q9NR63</id>
    </interactant>
    <interactant intactId="EBI-1055254">
        <id>Q8WXH2</id>
        <label>JPH3</label>
    </interactant>
    <organismsDiffer>false</organismsDiffer>
    <experiments>3</experiments>
</comment>
<comment type="subcellular location">
    <subcellularLocation>
        <location evidence="1">Endoplasmic reticulum membrane</location>
        <topology evidence="1">Peripheral membrane protein</topology>
    </subcellularLocation>
    <subcellularLocation>
        <location evidence="1">Microsome membrane</location>
        <topology evidence="1">Peripheral membrane protein</topology>
    </subcellularLocation>
</comment>
<comment type="alternative products">
    <event type="alternative splicing"/>
    <isoform>
        <id>Q9NR63-1</id>
        <name>1</name>
        <sequence type="displayed"/>
    </isoform>
    <isoform>
        <id>Q9NR63-2</id>
        <name>2</name>
        <sequence type="described" ref="VSP_042968"/>
    </isoform>
    <isoform>
        <id>Q9NR63-3</id>
        <name>3</name>
        <sequence type="described" ref="VSP_042967"/>
    </isoform>
</comment>
<comment type="tissue specificity">
    <text evidence="5">Highly expressed in brain, particularly in the cerebellum and pons.</text>
</comment>
<comment type="induction">
    <text evidence="5">By retinoic acid.</text>
</comment>
<comment type="disease" evidence="7">
    <disease id="DI-03424">
        <name>Radiohumeral fusions with other skeletal and craniofacial anomalies</name>
        <acronym>RHFCA</acronym>
        <description>A disease characterized by craniofacial malformations, occipital encephalocele, radiohumeral fusions, oligodactyly, advanced osseous maturation, and calvarial mineralization defects.</description>
        <dbReference type="MIM" id="614416"/>
    </disease>
    <text>The disease is caused by variants affecting the gene represented in this entry.</text>
</comment>
<comment type="similarity">
    <text evidence="14">Belongs to the cytochrome P450 family.</text>
</comment>
<comment type="sequence caution" evidence="14">
    <conflict type="erroneous initiation">
        <sequence resource="EMBL-CDS" id="BAH12154"/>
    </conflict>
    <text>Truncated N-terminus.</text>
</comment>
<sequence>MLFEGLDLVSALATLAACLVSVTLLLAVSQQLWQLRWAATRDKSCKLPIPKGSMGFPLIGETGHWLLQGSGFQSSRREKYGNVFKTHLLGRPLIRVTGAENVRKILMGEHHLVSTEWPRSTRMLLGPNTVSNSIGDIHRNKRKVFSKIFSHEALESYLPKIQLVIQDTLRAWSSHPEAINVYQEAQKLTFRMAIRVLLGFSIPEEDLGHLFEVYQQFVDNVFSLPVDLPFSGYRRGIQARQILQKGLEKAIREKLQCTQGKDYLDALDLLIESSKEHGKEMTMQELKDGTLELIFAAYATTASASTSLIMQLLKHPTVLEKLRDELRAHGILHSGGCPCEGTLRLDTLSGLRYLDCVIKEVMRLFTPISGGYRTVLQTFELDGFQIPKGWSVMYSIRDTHDTAPVFKDVNVFDPDRFSQARSEDKDGRFHYLPFGGGVRTCLGKHLAKLFLKVLAVELASTSRFELATRTFPRITLVPVLHPVDGLSVKFFGLDSNQNEILPETEAMLSATV</sequence>
<protein>
    <recommendedName>
        <fullName>Cytochrome P450 26B1</fullName>
        <ecNumber evidence="5 8 9">1.14.13.-</ecNumber>
    </recommendedName>
    <alternativeName>
        <fullName>Cytochrome P450 26A2</fullName>
    </alternativeName>
    <alternativeName>
        <fullName>Cytochrome P450 retinoic acid-inactivating 2</fullName>
        <shortName>Cytochrome P450RAI-2</shortName>
    </alternativeName>
    <alternativeName>
        <fullName>Retinoic acid-metabolizing cytochrome</fullName>
    </alternativeName>
</protein>
<accession>Q9NR63</accession>
<accession>B2R8M7</accession>
<accession>B7Z2K6</accession>
<accession>B7Z2P4</accession>
<accession>B7Z3B8</accession>
<accession>E4W5W7</accession>
<accession>Q32MC0</accession>
<accession>Q53TW1</accession>
<accession>Q9NP41</accession>
<organism>
    <name type="scientific">Homo sapiens</name>
    <name type="common">Human</name>
    <dbReference type="NCBI Taxonomy" id="9606"/>
    <lineage>
        <taxon>Eukaryota</taxon>
        <taxon>Metazoa</taxon>
        <taxon>Chordata</taxon>
        <taxon>Craniata</taxon>
        <taxon>Vertebrata</taxon>
        <taxon>Euteleostomi</taxon>
        <taxon>Mammalia</taxon>
        <taxon>Eutheria</taxon>
        <taxon>Euarchontoglires</taxon>
        <taxon>Primates</taxon>
        <taxon>Haplorrhini</taxon>
        <taxon>Catarrhini</taxon>
        <taxon>Hominidae</taxon>
        <taxon>Homo</taxon>
    </lineage>
</organism>
<feature type="chain" id="PRO_0000051985" description="Cytochrome P450 26B1">
    <location>
        <begin position="1"/>
        <end position="512"/>
    </location>
</feature>
<feature type="binding site" description="axial binding residue" evidence="4">
    <location>
        <position position="441"/>
    </location>
    <ligand>
        <name>heme</name>
        <dbReference type="ChEBI" id="CHEBI:30413"/>
    </ligand>
    <ligandPart>
        <name>Fe</name>
        <dbReference type="ChEBI" id="CHEBI:18248"/>
    </ligandPart>
</feature>
<feature type="splice variant" id="VSP_042967" description="In isoform 3." evidence="12">
    <original>MLFEGLDLVSALATLAACLVSVTLLLAVSQQLWQLRWAATRDKSCKLPIPKGSMGFPLIGETGHWLL</original>
    <variation>MKNKTCVLVCVSVFGGERGQVTVPRVGVRRPSLAGPLQKCTLRETRVWLP</variation>
    <location>
        <begin position="1"/>
        <end position="67"/>
    </location>
</feature>
<feature type="splice variant" id="VSP_042968" description="In isoform 2." evidence="12 13">
    <location>
        <begin position="69"/>
        <end position="143"/>
    </location>
</feature>
<feature type="sequence variant" id="VAR_075982" evidence="9">
    <original>H</original>
    <variation>R</variation>
    <location>
        <position position="64"/>
    </location>
</feature>
<feature type="sequence variant" id="VAR_067923" description="In RHFCA; dbSNP:rs281875232." evidence="7">
    <original>S</original>
    <variation>P</variation>
    <location>
        <position position="146"/>
    </location>
</feature>
<feature type="sequence variant" id="VAR_038722" description="In dbSNP:rs142999899." evidence="11">
    <original>V</original>
    <variation>M</variation>
    <location>
        <position position="181"/>
    </location>
</feature>
<feature type="sequence variant" id="VAR_038723" description="In dbSNP:rs765423228." evidence="11">
    <original>A</original>
    <variation>V</variation>
    <location>
        <position position="185"/>
    </location>
</feature>
<feature type="sequence variant" id="VAR_038724" description="In dbSNP:rs76025186." evidence="11">
    <original>R</original>
    <variation>H</variation>
    <location>
        <position position="191"/>
    </location>
</feature>
<feature type="sequence variant" id="VAR_038725" description="In dbSNP:rs143738797." evidence="11">
    <original>D</original>
    <variation>N</variation>
    <location>
        <position position="227"/>
    </location>
</feature>
<feature type="sequence variant" id="VAR_024383" description="In dbSNP:rs2241057." evidence="6 10 11">
    <original>L</original>
    <variation>S</variation>
    <location>
        <position position="264"/>
    </location>
</feature>
<feature type="sequence variant" id="VAR_067924" description="In RHFCA; dbSNP:rs281875231." evidence="7">
    <original>R</original>
    <variation>L</variation>
    <location>
        <position position="363"/>
    </location>
</feature>
<feature type="sequence variant" id="VAR_038726" description="In dbSNP:rs2286965." evidence="11">
    <original>E</original>
    <variation>K</variation>
    <location>
        <position position="380"/>
    </location>
</feature>
<feature type="sequence variant" id="VAR_038727" description="In dbSNP:rs7568553." evidence="11">
    <original>A</original>
    <variation>G</variation>
    <location>
        <position position="420"/>
    </location>
</feature>
<feature type="sequence variant" id="VAR_038728" description="In dbSNP:rs61751056." evidence="11">
    <original>R</original>
    <variation>C</variation>
    <location>
        <position position="473"/>
    </location>
</feature>
<feature type="sequence variant" id="VAR_038729" description="In dbSNP:rs148075682." evidence="11">
    <original>V</original>
    <variation>I</variation>
    <location>
        <position position="479"/>
    </location>
</feature>
<feature type="sequence conflict" description="In Ref. 3; BAH11930." evidence="14" ref="3">
    <original>D</original>
    <variation>G</variation>
    <location>
        <position position="265"/>
    </location>
</feature>
<evidence type="ECO:0000250" key="1">
    <source>
        <dbReference type="UniProtKB" id="O43174"/>
    </source>
</evidence>
<evidence type="ECO:0000250" key="2">
    <source>
        <dbReference type="UniProtKB" id="Q811W2"/>
    </source>
</evidence>
<evidence type="ECO:0000250" key="3">
    <source>
        <dbReference type="UniProtKB" id="Q9Y6A2"/>
    </source>
</evidence>
<evidence type="ECO:0000255" key="4"/>
<evidence type="ECO:0000269" key="5">
    <source>
    </source>
</evidence>
<evidence type="ECO:0000269" key="6">
    <source>
    </source>
</evidence>
<evidence type="ECO:0000269" key="7">
    <source>
    </source>
</evidence>
<evidence type="ECO:0000269" key="8">
    <source>
    </source>
</evidence>
<evidence type="ECO:0000269" key="9">
    <source>
    </source>
</evidence>
<evidence type="ECO:0000269" key="10">
    <source ref="2"/>
</evidence>
<evidence type="ECO:0000269" key="11">
    <source ref="4"/>
</evidence>
<evidence type="ECO:0000303" key="12">
    <source>
    </source>
</evidence>
<evidence type="ECO:0000303" key="13">
    <source ref="2"/>
</evidence>
<evidence type="ECO:0000305" key="14"/>
<evidence type="ECO:0000305" key="15">
    <source>
    </source>
</evidence>
<dbReference type="EC" id="1.14.13.-" evidence="5 8 9"/>
<dbReference type="EMBL" id="AF252297">
    <property type="protein sequence ID" value="AAF76003.1"/>
    <property type="molecule type" value="mRNA"/>
</dbReference>
<dbReference type="EMBL" id="FJ467289">
    <property type="protein sequence ID" value="ACR19332.1"/>
    <property type="molecule type" value="mRNA"/>
</dbReference>
<dbReference type="EMBL" id="AK294814">
    <property type="protein sequence ID" value="BAH11892.1"/>
    <property type="molecule type" value="mRNA"/>
</dbReference>
<dbReference type="EMBL" id="AK294933">
    <property type="protein sequence ID" value="BAH11930.1"/>
    <property type="molecule type" value="mRNA"/>
</dbReference>
<dbReference type="EMBL" id="AK295683">
    <property type="protein sequence ID" value="BAH12154.1"/>
    <property type="status" value="ALT_INIT"/>
    <property type="molecule type" value="mRNA"/>
</dbReference>
<dbReference type="EMBL" id="AK313433">
    <property type="protein sequence ID" value="BAG36224.1"/>
    <property type="molecule type" value="mRNA"/>
</dbReference>
<dbReference type="EMBL" id="AC007002">
    <property type="protein sequence ID" value="AAY14690.1"/>
    <property type="molecule type" value="Genomic_DNA"/>
</dbReference>
<dbReference type="EMBL" id="BC069443">
    <property type="protein sequence ID" value="AAH69443.1"/>
    <property type="molecule type" value="mRNA"/>
</dbReference>
<dbReference type="EMBL" id="BC109205">
    <property type="protein sequence ID" value="AAI09206.1"/>
    <property type="molecule type" value="mRNA"/>
</dbReference>
<dbReference type="CCDS" id="CCDS1919.1">
    <molecule id="Q9NR63-1"/>
</dbReference>
<dbReference type="CCDS" id="CCDS62934.1">
    <molecule id="Q9NR63-2"/>
</dbReference>
<dbReference type="RefSeq" id="NP_001264671.1">
    <molecule id="Q9NR63-2"/>
    <property type="nucleotide sequence ID" value="NM_001277742.2"/>
</dbReference>
<dbReference type="RefSeq" id="NP_063938.1">
    <molecule id="Q9NR63-1"/>
    <property type="nucleotide sequence ID" value="NM_019885.4"/>
</dbReference>
<dbReference type="SMR" id="Q9NR63"/>
<dbReference type="BioGRID" id="121153">
    <property type="interactions" value="35"/>
</dbReference>
<dbReference type="FunCoup" id="Q9NR63">
    <property type="interactions" value="282"/>
</dbReference>
<dbReference type="IntAct" id="Q9NR63">
    <property type="interactions" value="26"/>
</dbReference>
<dbReference type="STRING" id="9606.ENSP00000001146"/>
<dbReference type="BindingDB" id="Q9NR63"/>
<dbReference type="ChEMBL" id="CHEMBL3713687"/>
<dbReference type="DrugCentral" id="Q9NR63"/>
<dbReference type="SwissLipids" id="SLP:000001876"/>
<dbReference type="iPTMnet" id="Q9NR63"/>
<dbReference type="PhosphoSitePlus" id="Q9NR63"/>
<dbReference type="BioMuta" id="CYP26B1"/>
<dbReference type="DMDM" id="20137526"/>
<dbReference type="MassIVE" id="Q9NR63"/>
<dbReference type="PaxDb" id="9606-ENSP00000001146"/>
<dbReference type="PeptideAtlas" id="Q9NR63"/>
<dbReference type="ProteomicsDB" id="82286">
    <molecule id="Q9NR63-1"/>
</dbReference>
<dbReference type="ProteomicsDB" id="82287">
    <molecule id="Q9NR63-2"/>
</dbReference>
<dbReference type="ProteomicsDB" id="82288">
    <molecule id="Q9NR63-3"/>
</dbReference>
<dbReference type="Antibodypedia" id="2113">
    <property type="antibodies" value="276 antibodies from 33 providers"/>
</dbReference>
<dbReference type="DNASU" id="56603"/>
<dbReference type="Ensembl" id="ENST00000001146.7">
    <molecule id="Q9NR63-1"/>
    <property type="protein sequence ID" value="ENSP00000001146.2"/>
    <property type="gene ID" value="ENSG00000003137.9"/>
</dbReference>
<dbReference type="Ensembl" id="ENST00000546307.5">
    <molecule id="Q9NR63-2"/>
    <property type="protein sequence ID" value="ENSP00000443304.1"/>
    <property type="gene ID" value="ENSG00000003137.9"/>
</dbReference>
<dbReference type="GeneID" id="56603"/>
<dbReference type="KEGG" id="hsa:56603"/>
<dbReference type="MANE-Select" id="ENST00000001146.7">
    <property type="protein sequence ID" value="ENSP00000001146.2"/>
    <property type="RefSeq nucleotide sequence ID" value="NM_019885.4"/>
    <property type="RefSeq protein sequence ID" value="NP_063938.1"/>
</dbReference>
<dbReference type="UCSC" id="uc002sih.3">
    <molecule id="Q9NR63-1"/>
    <property type="organism name" value="human"/>
</dbReference>
<dbReference type="AGR" id="HGNC:20581"/>
<dbReference type="CTD" id="56603"/>
<dbReference type="DisGeNET" id="56603"/>
<dbReference type="GeneCards" id="CYP26B1"/>
<dbReference type="HGNC" id="HGNC:20581">
    <property type="gene designation" value="CYP26B1"/>
</dbReference>
<dbReference type="HPA" id="ENSG00000003137">
    <property type="expression patterns" value="Tissue enhanced (brain, skin)"/>
</dbReference>
<dbReference type="MalaCards" id="CYP26B1"/>
<dbReference type="MIM" id="605207">
    <property type="type" value="gene"/>
</dbReference>
<dbReference type="MIM" id="614416">
    <property type="type" value="phenotype"/>
</dbReference>
<dbReference type="neXtProt" id="NX_Q9NR63"/>
<dbReference type="OpenTargets" id="ENSG00000003137"/>
<dbReference type="Orphanet" id="293925">
    <property type="disease" value="Lethal occipital encephalocele-skeletal dysplasia syndrome"/>
</dbReference>
<dbReference type="PharmGKB" id="PA134879191"/>
<dbReference type="VEuPathDB" id="HostDB:ENSG00000003137"/>
<dbReference type="eggNOG" id="KOG0157">
    <property type="taxonomic scope" value="Eukaryota"/>
</dbReference>
<dbReference type="GeneTree" id="ENSGT00800000124060"/>
<dbReference type="InParanoid" id="Q9NR63"/>
<dbReference type="OMA" id="WDGQFVN"/>
<dbReference type="OrthoDB" id="1372046at2759"/>
<dbReference type="PAN-GO" id="Q9NR63">
    <property type="GO annotations" value="2 GO annotations based on evolutionary models"/>
</dbReference>
<dbReference type="PhylomeDB" id="Q9NR63"/>
<dbReference type="TreeFam" id="TF105093"/>
<dbReference type="PathwayCommons" id="Q9NR63"/>
<dbReference type="Reactome" id="R-HSA-211916">
    <property type="pathway name" value="Vitamins"/>
</dbReference>
<dbReference type="Reactome" id="R-HSA-5365859">
    <property type="pathway name" value="RA biosynthesis pathway"/>
</dbReference>
<dbReference type="Reactome" id="R-HSA-5579015">
    <property type="pathway name" value="Defective CYP26B1 causes RHFCA"/>
</dbReference>
<dbReference type="SABIO-RK" id="Q9NR63"/>
<dbReference type="SignaLink" id="Q9NR63"/>
<dbReference type="BioGRID-ORCS" id="56603">
    <property type="hits" value="17 hits in 1164 CRISPR screens"/>
</dbReference>
<dbReference type="ChiTaRS" id="CYP26B1">
    <property type="organism name" value="human"/>
</dbReference>
<dbReference type="GeneWiki" id="CYP26B1"/>
<dbReference type="GenomeRNAi" id="56603"/>
<dbReference type="Pharos" id="Q9NR63">
    <property type="development level" value="Tchem"/>
</dbReference>
<dbReference type="PRO" id="PR:Q9NR63"/>
<dbReference type="Proteomes" id="UP000005640">
    <property type="component" value="Chromosome 2"/>
</dbReference>
<dbReference type="RNAct" id="Q9NR63">
    <property type="molecule type" value="protein"/>
</dbReference>
<dbReference type="Bgee" id="ENSG00000003137">
    <property type="expression patterns" value="Expressed in pons and 166 other cell types or tissues"/>
</dbReference>
<dbReference type="ExpressionAtlas" id="Q9NR63">
    <property type="expression patterns" value="baseline and differential"/>
</dbReference>
<dbReference type="GO" id="GO:0005737">
    <property type="term" value="C:cytoplasm"/>
    <property type="evidence" value="ECO:0000314"/>
    <property type="project" value="UniProtKB"/>
</dbReference>
<dbReference type="GO" id="GO:0005789">
    <property type="term" value="C:endoplasmic reticulum membrane"/>
    <property type="evidence" value="ECO:0000304"/>
    <property type="project" value="Reactome"/>
</dbReference>
<dbReference type="GO" id="GO:0062183">
    <property type="term" value="F:all-trans retinoic acid 18-hydroxylase activity"/>
    <property type="evidence" value="ECO:0007669"/>
    <property type="project" value="RHEA"/>
</dbReference>
<dbReference type="GO" id="GO:0020037">
    <property type="term" value="F:heme binding"/>
    <property type="evidence" value="ECO:0000303"/>
    <property type="project" value="BHF-UCL"/>
</dbReference>
<dbReference type="GO" id="GO:0005506">
    <property type="term" value="F:iron ion binding"/>
    <property type="evidence" value="ECO:0007669"/>
    <property type="project" value="InterPro"/>
</dbReference>
<dbReference type="GO" id="GO:0004497">
    <property type="term" value="F:monooxygenase activity"/>
    <property type="evidence" value="ECO:0000318"/>
    <property type="project" value="GO_Central"/>
</dbReference>
<dbReference type="GO" id="GO:0016709">
    <property type="term" value="F:oxidoreductase activity, acting on paired donors, with incorporation or reduction of molecular oxygen, NAD(P)H as one donor, and incorporation of one atom of oxygen"/>
    <property type="evidence" value="ECO:0000314"/>
    <property type="project" value="UniProtKB"/>
</dbReference>
<dbReference type="GO" id="GO:0008401">
    <property type="term" value="F:retinoic acid 4-hydroxylase activity"/>
    <property type="evidence" value="ECO:0000314"/>
    <property type="project" value="BHF-UCL"/>
</dbReference>
<dbReference type="GO" id="GO:0001972">
    <property type="term" value="F:retinoic acid binding"/>
    <property type="evidence" value="ECO:0000314"/>
    <property type="project" value="BHF-UCL"/>
</dbReference>
<dbReference type="GO" id="GO:0060349">
    <property type="term" value="P:bone morphogenesis"/>
    <property type="evidence" value="ECO:0000315"/>
    <property type="project" value="UniProtKB"/>
</dbReference>
<dbReference type="GO" id="GO:0001709">
    <property type="term" value="P:cell fate determination"/>
    <property type="evidence" value="ECO:0000250"/>
    <property type="project" value="BHF-UCL"/>
</dbReference>
<dbReference type="GO" id="GO:0071300">
    <property type="term" value="P:cellular response to retinoic acid"/>
    <property type="evidence" value="ECO:0007669"/>
    <property type="project" value="Ensembl"/>
</dbReference>
<dbReference type="GO" id="GO:0007417">
    <property type="term" value="P:central nervous system development"/>
    <property type="evidence" value="ECO:0000318"/>
    <property type="project" value="GO_Central"/>
</dbReference>
<dbReference type="GO" id="GO:0070268">
    <property type="term" value="P:cornification"/>
    <property type="evidence" value="ECO:0007669"/>
    <property type="project" value="Ensembl"/>
</dbReference>
<dbReference type="GO" id="GO:0030326">
    <property type="term" value="P:embryonic limb morphogenesis"/>
    <property type="evidence" value="ECO:0000250"/>
    <property type="project" value="BHF-UCL"/>
</dbReference>
<dbReference type="GO" id="GO:0061436">
    <property type="term" value="P:establishment of skin barrier"/>
    <property type="evidence" value="ECO:0007669"/>
    <property type="project" value="Ensembl"/>
</dbReference>
<dbReference type="GO" id="GO:0001768">
    <property type="term" value="P:establishment of T cell polarity"/>
    <property type="evidence" value="ECO:0007669"/>
    <property type="project" value="Ensembl"/>
</dbReference>
<dbReference type="GO" id="GO:0006954">
    <property type="term" value="P:inflammatory response"/>
    <property type="evidence" value="ECO:0007669"/>
    <property type="project" value="Ensembl"/>
</dbReference>
<dbReference type="GO" id="GO:0001822">
    <property type="term" value="P:kidney development"/>
    <property type="evidence" value="ECO:0007669"/>
    <property type="project" value="Ensembl"/>
</dbReference>
<dbReference type="GO" id="GO:0007140">
    <property type="term" value="P:male meiotic nuclear division"/>
    <property type="evidence" value="ECO:0000250"/>
    <property type="project" value="BHF-UCL"/>
</dbReference>
<dbReference type="GO" id="GO:0048387">
    <property type="term" value="P:negative regulation of retinoic acid receptor signaling pathway"/>
    <property type="evidence" value="ECO:0000304"/>
    <property type="project" value="BHF-UCL"/>
</dbReference>
<dbReference type="GO" id="GO:0010628">
    <property type="term" value="P:positive regulation of gene expression"/>
    <property type="evidence" value="ECO:0007669"/>
    <property type="project" value="Ensembl"/>
</dbReference>
<dbReference type="GO" id="GO:2001037">
    <property type="term" value="P:positive regulation of tongue muscle cell differentiation"/>
    <property type="evidence" value="ECO:0007669"/>
    <property type="project" value="Ensembl"/>
</dbReference>
<dbReference type="GO" id="GO:0009954">
    <property type="term" value="P:proximal/distal pattern formation"/>
    <property type="evidence" value="ECO:0000250"/>
    <property type="project" value="BHF-UCL"/>
</dbReference>
<dbReference type="GO" id="GO:0045580">
    <property type="term" value="P:regulation of T cell differentiation"/>
    <property type="evidence" value="ECO:0007669"/>
    <property type="project" value="Ensembl"/>
</dbReference>
<dbReference type="GO" id="GO:0033189">
    <property type="term" value="P:response to vitamin A"/>
    <property type="evidence" value="ECO:0007669"/>
    <property type="project" value="Ensembl"/>
</dbReference>
<dbReference type="GO" id="GO:0034653">
    <property type="term" value="P:retinoic acid catabolic process"/>
    <property type="evidence" value="ECO:0000314"/>
    <property type="project" value="BHF-UCL"/>
</dbReference>
<dbReference type="GO" id="GO:0042573">
    <property type="term" value="P:retinoic acid metabolic process"/>
    <property type="evidence" value="ECO:0000314"/>
    <property type="project" value="UniProtKB"/>
</dbReference>
<dbReference type="GO" id="GO:0048384">
    <property type="term" value="P:retinoic acid receptor signaling pathway"/>
    <property type="evidence" value="ECO:0007669"/>
    <property type="project" value="Ensembl"/>
</dbReference>
<dbReference type="GO" id="GO:0007283">
    <property type="term" value="P:spermatogenesis"/>
    <property type="evidence" value="ECO:0000250"/>
    <property type="project" value="BHF-UCL"/>
</dbReference>
<dbReference type="GO" id="GO:0043587">
    <property type="term" value="P:tongue morphogenesis"/>
    <property type="evidence" value="ECO:0007669"/>
    <property type="project" value="Ensembl"/>
</dbReference>
<dbReference type="GO" id="GO:0006766">
    <property type="term" value="P:vitamin metabolic process"/>
    <property type="evidence" value="ECO:0000304"/>
    <property type="project" value="Reactome"/>
</dbReference>
<dbReference type="GO" id="GO:0006805">
    <property type="term" value="P:xenobiotic metabolic process"/>
    <property type="evidence" value="ECO:0000314"/>
    <property type="project" value="UniProtKB"/>
</dbReference>
<dbReference type="CDD" id="cd20637">
    <property type="entry name" value="CYP26B1"/>
    <property type="match status" value="1"/>
</dbReference>
<dbReference type="FunFam" id="1.10.630.10:FF:000009">
    <property type="entry name" value="Cytochrome P450 26B1 isoform 1"/>
    <property type="match status" value="1"/>
</dbReference>
<dbReference type="Gene3D" id="1.10.630.10">
    <property type="entry name" value="Cytochrome P450"/>
    <property type="match status" value="1"/>
</dbReference>
<dbReference type="InterPro" id="IPR001128">
    <property type="entry name" value="Cyt_P450"/>
</dbReference>
<dbReference type="InterPro" id="IPR017972">
    <property type="entry name" value="Cyt_P450_CS"/>
</dbReference>
<dbReference type="InterPro" id="IPR002403">
    <property type="entry name" value="Cyt_P450_E_grp-IV"/>
</dbReference>
<dbReference type="InterPro" id="IPR036396">
    <property type="entry name" value="Cyt_P450_sf"/>
</dbReference>
<dbReference type="PANTHER" id="PTHR24286">
    <property type="entry name" value="CYTOCHROME P450 26"/>
    <property type="match status" value="1"/>
</dbReference>
<dbReference type="PANTHER" id="PTHR24286:SF177">
    <property type="entry name" value="CYTOCHROME P450 26B1"/>
    <property type="match status" value="1"/>
</dbReference>
<dbReference type="Pfam" id="PF00067">
    <property type="entry name" value="p450"/>
    <property type="match status" value="1"/>
</dbReference>
<dbReference type="PRINTS" id="PR00465">
    <property type="entry name" value="EP450IV"/>
</dbReference>
<dbReference type="PRINTS" id="PR00385">
    <property type="entry name" value="P450"/>
</dbReference>
<dbReference type="SUPFAM" id="SSF48264">
    <property type="entry name" value="Cytochrome P450"/>
    <property type="match status" value="1"/>
</dbReference>
<dbReference type="PROSITE" id="PS00086">
    <property type="entry name" value="CYTOCHROME_P450"/>
    <property type="match status" value="1"/>
</dbReference>
<keyword id="KW-0025">Alternative splicing</keyword>
<keyword id="KW-0989">Craniosynostosis</keyword>
<keyword id="KW-0225">Disease variant</keyword>
<keyword id="KW-0256">Endoplasmic reticulum</keyword>
<keyword id="KW-0349">Heme</keyword>
<keyword id="KW-0408">Iron</keyword>
<keyword id="KW-0443">Lipid metabolism</keyword>
<keyword id="KW-0472">Membrane</keyword>
<keyword id="KW-0479">Metal-binding</keyword>
<keyword id="KW-0492">Microsome</keyword>
<keyword id="KW-0503">Monooxygenase</keyword>
<keyword id="KW-0560">Oxidoreductase</keyword>
<keyword id="KW-1267">Proteomics identification</keyword>
<keyword id="KW-1185">Reference proteome</keyword>
<name>CP26B_HUMAN</name>
<reference key="1">
    <citation type="journal article" date="2000" name="Proc. Natl. Acad. Sci. U.S.A.">
        <title>Identification of the human cytochrome P450, P450RAI-2, which is predominantly expressed in the adult cerebellum and is responsible for all-trans-retinoic acid metabolism.</title>
        <authorList>
            <person name="White J.A."/>
            <person name="Ramshaw H."/>
            <person name="Taimi M."/>
            <person name="Stangle W."/>
            <person name="Zhang A."/>
            <person name="Everingham S."/>
            <person name="Creighton S."/>
            <person name="Tam S.-P."/>
            <person name="Jones G."/>
            <person name="Petkovich M."/>
        </authorList>
    </citation>
    <scope>NUCLEOTIDE SEQUENCE [MRNA] (ISOFORM 1)</scope>
    <scope>FUNCTION</scope>
    <scope>CATALYTIC ACTIVITY</scope>
    <scope>TISSUE SPECIFICITY</scope>
    <scope>INDUCTION</scope>
    <source>
        <tissue>Retina</tissue>
    </source>
</reference>
<reference key="2">
    <citation type="submission" date="2008-11" db="EMBL/GenBank/DDBJ databases">
        <title>A spliced version of the human cytochrome P450 26B1 has an alternative function in retinoic acid metabolism.</title>
        <authorList>
            <person name="Savenstrand H."/>
            <person name="Kumawat A."/>
            <person name="Karlsson M."/>
            <person name="Eriksson L.A."/>
            <person name="Sirsjo A."/>
            <person name="Strid A."/>
        </authorList>
    </citation>
    <scope>NUCLEOTIDE SEQUENCE [MRNA] (ISOFORM 2)</scope>
    <scope>VARIANT SER-264</scope>
    <source>
        <tissue>Vascular smooth muscle</tissue>
    </source>
</reference>
<reference key="3">
    <citation type="journal article" date="2004" name="Nat. Genet.">
        <title>Complete sequencing and characterization of 21,243 full-length human cDNAs.</title>
        <authorList>
            <person name="Ota T."/>
            <person name="Suzuki Y."/>
            <person name="Nishikawa T."/>
            <person name="Otsuki T."/>
            <person name="Sugiyama T."/>
            <person name="Irie R."/>
            <person name="Wakamatsu A."/>
            <person name="Hayashi K."/>
            <person name="Sato H."/>
            <person name="Nagai K."/>
            <person name="Kimura K."/>
            <person name="Makita H."/>
            <person name="Sekine M."/>
            <person name="Obayashi M."/>
            <person name="Nishi T."/>
            <person name="Shibahara T."/>
            <person name="Tanaka T."/>
            <person name="Ishii S."/>
            <person name="Yamamoto J."/>
            <person name="Saito K."/>
            <person name="Kawai Y."/>
            <person name="Isono Y."/>
            <person name="Nakamura Y."/>
            <person name="Nagahari K."/>
            <person name="Murakami K."/>
            <person name="Yasuda T."/>
            <person name="Iwayanagi T."/>
            <person name="Wagatsuma M."/>
            <person name="Shiratori A."/>
            <person name="Sudo H."/>
            <person name="Hosoiri T."/>
            <person name="Kaku Y."/>
            <person name="Kodaira H."/>
            <person name="Kondo H."/>
            <person name="Sugawara M."/>
            <person name="Takahashi M."/>
            <person name="Kanda K."/>
            <person name="Yokoi T."/>
            <person name="Furuya T."/>
            <person name="Kikkawa E."/>
            <person name="Omura Y."/>
            <person name="Abe K."/>
            <person name="Kamihara K."/>
            <person name="Katsuta N."/>
            <person name="Sato K."/>
            <person name="Tanikawa M."/>
            <person name="Yamazaki M."/>
            <person name="Ninomiya K."/>
            <person name="Ishibashi T."/>
            <person name="Yamashita H."/>
            <person name="Murakawa K."/>
            <person name="Fujimori K."/>
            <person name="Tanai H."/>
            <person name="Kimata M."/>
            <person name="Watanabe M."/>
            <person name="Hiraoka S."/>
            <person name="Chiba Y."/>
            <person name="Ishida S."/>
            <person name="Ono Y."/>
            <person name="Takiguchi S."/>
            <person name="Watanabe S."/>
            <person name="Yosida M."/>
            <person name="Hotuta T."/>
            <person name="Kusano J."/>
            <person name="Kanehori K."/>
            <person name="Takahashi-Fujii A."/>
            <person name="Hara H."/>
            <person name="Tanase T.-O."/>
            <person name="Nomura Y."/>
            <person name="Togiya S."/>
            <person name="Komai F."/>
            <person name="Hara R."/>
            <person name="Takeuchi K."/>
            <person name="Arita M."/>
            <person name="Imose N."/>
            <person name="Musashino K."/>
            <person name="Yuuki H."/>
            <person name="Oshima A."/>
            <person name="Sasaki N."/>
            <person name="Aotsuka S."/>
            <person name="Yoshikawa Y."/>
            <person name="Matsunawa H."/>
            <person name="Ichihara T."/>
            <person name="Shiohata N."/>
            <person name="Sano S."/>
            <person name="Moriya S."/>
            <person name="Momiyama H."/>
            <person name="Satoh N."/>
            <person name="Takami S."/>
            <person name="Terashima Y."/>
            <person name="Suzuki O."/>
            <person name="Nakagawa S."/>
            <person name="Senoh A."/>
            <person name="Mizoguchi H."/>
            <person name="Goto Y."/>
            <person name="Shimizu F."/>
            <person name="Wakebe H."/>
            <person name="Hishigaki H."/>
            <person name="Watanabe T."/>
            <person name="Sugiyama A."/>
            <person name="Takemoto M."/>
            <person name="Kawakami B."/>
            <person name="Yamazaki M."/>
            <person name="Watanabe K."/>
            <person name="Kumagai A."/>
            <person name="Itakura S."/>
            <person name="Fukuzumi Y."/>
            <person name="Fujimori Y."/>
            <person name="Komiyama M."/>
            <person name="Tashiro H."/>
            <person name="Tanigami A."/>
            <person name="Fujiwara T."/>
            <person name="Ono T."/>
            <person name="Yamada K."/>
            <person name="Fujii Y."/>
            <person name="Ozaki K."/>
            <person name="Hirao M."/>
            <person name="Ohmori Y."/>
            <person name="Kawabata A."/>
            <person name="Hikiji T."/>
            <person name="Kobatake N."/>
            <person name="Inagaki H."/>
            <person name="Ikema Y."/>
            <person name="Okamoto S."/>
            <person name="Okitani R."/>
            <person name="Kawakami T."/>
            <person name="Noguchi S."/>
            <person name="Itoh T."/>
            <person name="Shigeta K."/>
            <person name="Senba T."/>
            <person name="Matsumura K."/>
            <person name="Nakajima Y."/>
            <person name="Mizuno T."/>
            <person name="Morinaga M."/>
            <person name="Sasaki M."/>
            <person name="Togashi T."/>
            <person name="Oyama M."/>
            <person name="Hata H."/>
            <person name="Watanabe M."/>
            <person name="Komatsu T."/>
            <person name="Mizushima-Sugano J."/>
            <person name="Satoh T."/>
            <person name="Shirai Y."/>
            <person name="Takahashi Y."/>
            <person name="Nakagawa K."/>
            <person name="Okumura K."/>
            <person name="Nagase T."/>
            <person name="Nomura N."/>
            <person name="Kikuchi H."/>
            <person name="Masuho Y."/>
            <person name="Yamashita R."/>
            <person name="Nakai K."/>
            <person name="Yada T."/>
            <person name="Nakamura Y."/>
            <person name="Ohara O."/>
            <person name="Isogai T."/>
            <person name="Sugano S."/>
        </authorList>
    </citation>
    <scope>NUCLEOTIDE SEQUENCE [LARGE SCALE MRNA] (ISOFORMS 1; 2 AND 3)</scope>
    <scope>VARIANT SER-264</scope>
    <source>
        <tissue>Brain</tissue>
        <tissue>Cerebellum</tissue>
        <tissue>Hippocampus</tissue>
    </source>
</reference>
<reference key="4">
    <citation type="submission" date="2005-03" db="EMBL/GenBank/DDBJ databases">
        <authorList>
            <consortium name="SeattleSNPs variation discovery resource"/>
        </authorList>
    </citation>
    <scope>NUCLEOTIDE SEQUENCE [GENOMIC DNA]</scope>
    <scope>VARIANTS MET-181; VAL-185; HIS-191; ASN-227; SER-264; LYS-380; GLY-420; CYS-473 AND ILE-479</scope>
</reference>
<reference key="5">
    <citation type="journal article" date="2005" name="Nature">
        <title>Generation and annotation of the DNA sequences of human chromosomes 2 and 4.</title>
        <authorList>
            <person name="Hillier L.W."/>
            <person name="Graves T.A."/>
            <person name="Fulton R.S."/>
            <person name="Fulton L.A."/>
            <person name="Pepin K.H."/>
            <person name="Minx P."/>
            <person name="Wagner-McPherson C."/>
            <person name="Layman D."/>
            <person name="Wylie K."/>
            <person name="Sekhon M."/>
            <person name="Becker M.C."/>
            <person name="Fewell G.A."/>
            <person name="Delehaunty K.D."/>
            <person name="Miner T.L."/>
            <person name="Nash W.E."/>
            <person name="Kremitzki C."/>
            <person name="Oddy L."/>
            <person name="Du H."/>
            <person name="Sun H."/>
            <person name="Bradshaw-Cordum H."/>
            <person name="Ali J."/>
            <person name="Carter J."/>
            <person name="Cordes M."/>
            <person name="Harris A."/>
            <person name="Isak A."/>
            <person name="van Brunt A."/>
            <person name="Nguyen C."/>
            <person name="Du F."/>
            <person name="Courtney L."/>
            <person name="Kalicki J."/>
            <person name="Ozersky P."/>
            <person name="Abbott S."/>
            <person name="Armstrong J."/>
            <person name="Belter E.A."/>
            <person name="Caruso L."/>
            <person name="Cedroni M."/>
            <person name="Cotton M."/>
            <person name="Davidson T."/>
            <person name="Desai A."/>
            <person name="Elliott G."/>
            <person name="Erb T."/>
            <person name="Fronick C."/>
            <person name="Gaige T."/>
            <person name="Haakenson W."/>
            <person name="Haglund K."/>
            <person name="Holmes A."/>
            <person name="Harkins R."/>
            <person name="Kim K."/>
            <person name="Kruchowski S.S."/>
            <person name="Strong C.M."/>
            <person name="Grewal N."/>
            <person name="Goyea E."/>
            <person name="Hou S."/>
            <person name="Levy A."/>
            <person name="Martinka S."/>
            <person name="Mead K."/>
            <person name="McLellan M.D."/>
            <person name="Meyer R."/>
            <person name="Randall-Maher J."/>
            <person name="Tomlinson C."/>
            <person name="Dauphin-Kohlberg S."/>
            <person name="Kozlowicz-Reilly A."/>
            <person name="Shah N."/>
            <person name="Swearengen-Shahid S."/>
            <person name="Snider J."/>
            <person name="Strong J.T."/>
            <person name="Thompson J."/>
            <person name="Yoakum M."/>
            <person name="Leonard S."/>
            <person name="Pearman C."/>
            <person name="Trani L."/>
            <person name="Radionenko M."/>
            <person name="Waligorski J.E."/>
            <person name="Wang C."/>
            <person name="Rock S.M."/>
            <person name="Tin-Wollam A.-M."/>
            <person name="Maupin R."/>
            <person name="Latreille P."/>
            <person name="Wendl M.C."/>
            <person name="Yang S.-P."/>
            <person name="Pohl C."/>
            <person name="Wallis J.W."/>
            <person name="Spieth J."/>
            <person name="Bieri T.A."/>
            <person name="Berkowicz N."/>
            <person name="Nelson J.O."/>
            <person name="Osborne J."/>
            <person name="Ding L."/>
            <person name="Meyer R."/>
            <person name="Sabo A."/>
            <person name="Shotland Y."/>
            <person name="Sinha P."/>
            <person name="Wohldmann P.E."/>
            <person name="Cook L.L."/>
            <person name="Hickenbotham M.T."/>
            <person name="Eldred J."/>
            <person name="Williams D."/>
            <person name="Jones T.A."/>
            <person name="She X."/>
            <person name="Ciccarelli F.D."/>
            <person name="Izaurralde E."/>
            <person name="Taylor J."/>
            <person name="Schmutz J."/>
            <person name="Myers R.M."/>
            <person name="Cox D.R."/>
            <person name="Huang X."/>
            <person name="McPherson J.D."/>
            <person name="Mardis E.R."/>
            <person name="Clifton S.W."/>
            <person name="Warren W.C."/>
            <person name="Chinwalla A.T."/>
            <person name="Eddy S.R."/>
            <person name="Marra M.A."/>
            <person name="Ovcharenko I."/>
            <person name="Furey T.S."/>
            <person name="Miller W."/>
            <person name="Eichler E.E."/>
            <person name="Bork P."/>
            <person name="Suyama M."/>
            <person name="Torrents D."/>
            <person name="Waterston R.H."/>
            <person name="Wilson R.K."/>
        </authorList>
    </citation>
    <scope>NUCLEOTIDE SEQUENCE [LARGE SCALE GENOMIC DNA]</scope>
</reference>
<reference key="6">
    <citation type="journal article" date="2004" name="Genome Res.">
        <title>The status, quality, and expansion of the NIH full-length cDNA project: the Mammalian Gene Collection (MGC).</title>
        <authorList>
            <consortium name="The MGC Project Team"/>
        </authorList>
    </citation>
    <scope>NUCLEOTIDE SEQUENCE [LARGE SCALE MRNA] (ISOFORM 1)</scope>
</reference>
<reference key="7">
    <citation type="journal article" date="2011" name="Am. J. Hum. Genet.">
        <title>Craniosynostosis and multiple skeletal anomalies in humans and zebrafish result from a defect in the localized degradation of retinoic acid.</title>
        <authorList>
            <person name="Laue K."/>
            <person name="Pogoda H.M."/>
            <person name="Daniel P.B."/>
            <person name="van Haeringen A."/>
            <person name="Alanay Y."/>
            <person name="von Ameln S."/>
            <person name="Rachwalski M."/>
            <person name="Morgan T."/>
            <person name="Gray M.J."/>
            <person name="Breuning M.H."/>
            <person name="Sawyer G.M."/>
            <person name="Sutherland-Smith A.J."/>
            <person name="Nikkels P.G."/>
            <person name="Kubisch C."/>
            <person name="Bloch W."/>
            <person name="Wollnik B."/>
            <person name="Hammerschmidt M."/>
            <person name="Robertson S.P."/>
        </authorList>
    </citation>
    <scope>FUNCTION</scope>
    <scope>VARIANTS RHFCA PRO-146 AND LEU-363</scope>
</reference>
<reference key="8">
    <citation type="journal article" date="2012" name="Biochem. Pharmacol.">
        <title>Comparison of the function and expression of CYP26A1 and CYP26B1, the two retinoic acid hydroxylases.</title>
        <authorList>
            <person name="Topletz A.R."/>
            <person name="Thatcher J.E."/>
            <person name="Zelter A."/>
            <person name="Lutz J.D."/>
            <person name="Tay S."/>
            <person name="Nelson W.L."/>
            <person name="Isoherranen N."/>
        </authorList>
    </citation>
    <scope>FUNCTION</scope>
    <scope>CATALYTIC ACTIVITY</scope>
</reference>
<reference key="9">
    <citation type="journal article" date="2016" name="J. Pharmacol. Exp. Ther.">
        <title>Identification of tazarotenic acid as the first xenobiotic substrate of human retinoic acid hydroxylase CYP26A1 and CYP26B1.</title>
        <authorList>
            <person name="Foti R.S."/>
            <person name="Isoherranen N."/>
            <person name="Zelter A."/>
            <person name="Dickmann L.J."/>
            <person name="Buttrick B.R."/>
            <person name="Diaz P."/>
            <person name="Douguet D."/>
        </authorList>
    </citation>
    <scope>FUNCTION</scope>
    <scope>CATALYTIC ACTIVITY</scope>
    <scope>BIOPHYSICOCHEMICAL PROPERTIES</scope>
    <scope>VARIANT ARG-64</scope>
</reference>
<gene>
    <name type="primary">CYP26B1</name>
    <name type="synonym">CYP26A2</name>
    <name type="synonym">P450RAI2</name>
</gene>
<proteinExistence type="evidence at protein level"/>